<protein>
    <recommendedName>
        <fullName>Periviscerokinin-2</fullName>
        <shortName>Pea-PVK-2</shortName>
    </recommendedName>
    <alternativeName>
        <fullName>Periviscerokinin-3</fullName>
        <shortName>PerAm-PVK-3</shortName>
    </alternativeName>
</protein>
<keyword id="KW-0027">Amidation</keyword>
<keyword id="KW-0903">Direct protein sequencing</keyword>
<keyword id="KW-0527">Neuropeptide</keyword>
<keyword id="KW-0964">Secreted</keyword>
<proteinExistence type="evidence at protein level"/>
<comment type="function">
    <text evidence="2">Myoactive peptide; has excitatory actions on the hyperneural muscle.</text>
</comment>
<comment type="subcellular location">
    <subcellularLocation>
        <location>Secreted</location>
    </subcellularLocation>
</comment>
<comment type="mass spectrometry" mass="1189.3" method="MALDI" evidence="2"/>
<comment type="similarity">
    <text evidence="3">Belongs to the periviscerokinin family.</text>
</comment>
<reference key="1">
    <citation type="journal article" date="1998" name="Peptides">
        <title>Isolation of periviscerokinin-2 from the abdominal perisympathetic organs of the American cockroach, Periplaneta americana.</title>
        <authorList>
            <person name="Predel R."/>
            <person name="Rapus J."/>
            <person name="Eckert M."/>
            <person name="Holman G.M."/>
            <person name="Nachman R.J."/>
            <person name="Wang Y."/>
            <person name="Penzlin H."/>
        </authorList>
    </citation>
    <scope>PROTEIN SEQUENCE</scope>
    <scope>FUNCTION</scope>
    <scope>MASS SPECTROMETRY</scope>
    <source>
        <tissue>Abdominal perisympathetic organs</tissue>
    </source>
</reference>
<reference key="2">
    <citation type="journal article" date="2009" name="BMC Evol. Biol.">
        <title>A proteomic approach for studying insect phylogeny: CAPA peptides of ancient insect taxa (Dictyoptera, Blattoptera) as a test case.</title>
        <authorList>
            <person name="Roth S."/>
            <person name="Fromm B."/>
            <person name="Gaede G."/>
            <person name="Predel R."/>
        </authorList>
    </citation>
    <scope>PROTEIN SEQUENCE</scope>
    <scope>AMIDATION AT VAL-12</scope>
    <source>
        <tissue>Abdominal perisympathetic organs</tissue>
    </source>
</reference>
<evidence type="ECO:0000269" key="1">
    <source>
    </source>
</evidence>
<evidence type="ECO:0000269" key="2">
    <source>
    </source>
</evidence>
<evidence type="ECO:0000305" key="3"/>
<dbReference type="GO" id="GO:0005576">
    <property type="term" value="C:extracellular region"/>
    <property type="evidence" value="ECO:0007669"/>
    <property type="project" value="UniProtKB-SubCell"/>
</dbReference>
<dbReference type="GO" id="GO:0007218">
    <property type="term" value="P:neuropeptide signaling pathway"/>
    <property type="evidence" value="ECO:0007669"/>
    <property type="project" value="UniProtKB-KW"/>
</dbReference>
<dbReference type="InterPro" id="IPR013231">
    <property type="entry name" value="Periviscerokinin"/>
</dbReference>
<dbReference type="Pfam" id="PF08259">
    <property type="entry name" value="Periviscerokin"/>
    <property type="match status" value="1"/>
</dbReference>
<organism>
    <name type="scientific">Periplaneta americana</name>
    <name type="common">American cockroach</name>
    <name type="synonym">Blatta americana</name>
    <dbReference type="NCBI Taxonomy" id="6978"/>
    <lineage>
        <taxon>Eukaryota</taxon>
        <taxon>Metazoa</taxon>
        <taxon>Ecdysozoa</taxon>
        <taxon>Arthropoda</taxon>
        <taxon>Hexapoda</taxon>
        <taxon>Insecta</taxon>
        <taxon>Pterygota</taxon>
        <taxon>Neoptera</taxon>
        <taxon>Polyneoptera</taxon>
        <taxon>Dictyoptera</taxon>
        <taxon>Blattodea</taxon>
        <taxon>Blattoidea</taxon>
        <taxon>Blattidae</taxon>
        <taxon>Blattinae</taxon>
        <taxon>Periplaneta</taxon>
    </lineage>
</organism>
<name>PVK2_PERAM</name>
<accession>P81555</accession>
<sequence length="12" mass="1190">GSSSGLISMPRV</sequence>
<feature type="peptide" id="PRO_0000044268" description="Periviscerokinin-2">
    <location>
        <begin position="1"/>
        <end position="12"/>
    </location>
</feature>
<feature type="modified residue" description="Valine amide" evidence="1">
    <location>
        <position position="12"/>
    </location>
</feature>